<proteinExistence type="predicted"/>
<dbReference type="EMBL" id="U24145">
    <property type="protein sequence ID" value="AAA65436.1"/>
    <property type="status" value="ALT_INIT"/>
    <property type="molecule type" value="Genomic_DNA"/>
</dbReference>
<dbReference type="EMBL" id="X82178">
    <property type="protein sequence ID" value="CAA57668.1"/>
    <property type="status" value="ALT_INIT"/>
    <property type="molecule type" value="Genomic_DNA"/>
</dbReference>
<dbReference type="EMBL" id="AE000512">
    <property type="protein sequence ID" value="AAD36009.1"/>
    <property type="molecule type" value="Genomic_DNA"/>
</dbReference>
<dbReference type="PIR" id="H72314">
    <property type="entry name" value="H72314"/>
</dbReference>
<dbReference type="RefSeq" id="NP_228736.1">
    <property type="nucleotide sequence ID" value="NC_000853.1"/>
</dbReference>
<dbReference type="RefSeq" id="WP_004080634.1">
    <property type="nucleotide sequence ID" value="NC_000853.1"/>
</dbReference>
<dbReference type="STRING" id="243274.TM_0928"/>
<dbReference type="PaxDb" id="243274-THEMA_09710"/>
<dbReference type="EnsemblBacteria" id="AAD36009">
    <property type="protein sequence ID" value="AAD36009"/>
    <property type="gene ID" value="TM_0928"/>
</dbReference>
<dbReference type="KEGG" id="tma:TM0928"/>
<dbReference type="KEGG" id="tmi:THEMA_09710"/>
<dbReference type="KEGG" id="tmm:Tmari_0930"/>
<dbReference type="KEGG" id="tmw:THMA_0950"/>
<dbReference type="InParanoid" id="P56728"/>
<dbReference type="OrthoDB" id="37179at2"/>
<dbReference type="Proteomes" id="UP000008183">
    <property type="component" value="Chromosome"/>
</dbReference>
<dbReference type="InterPro" id="IPR032606">
    <property type="entry name" value="DUF4895"/>
</dbReference>
<dbReference type="Pfam" id="PF16236">
    <property type="entry name" value="DUF4895"/>
    <property type="match status" value="1"/>
</dbReference>
<accession>P56728</accession>
<accession>P46803</accession>
<gene>
    <name type="ordered locus">TM_0928</name>
</gene>
<protein>
    <recommendedName>
        <fullName>Uncharacterized protein TM_0928</fullName>
    </recommendedName>
</protein>
<sequence>MKRELELLLKETSVHNPLKDYESKLDNVHLHTFVLRIKRHRFPSLFLMIDTSDRRLLNLSVEDPFDREPCIYRVEADVPESMVSFYTKLFEKVDSVSAGIFRMPLKVKVLRSAGNESWLQKIFLQEKVKNMEFFLFQNRVSDENLEKMMKLLKSRLKIVLRNEGIDVFLETPEWVDKEHISLLHEMGVVLRKKKGIQPAQNPMEQAFLTLRVGYDQFFEEDFDMEYFAKDFMEKLKRMYEVLVSML</sequence>
<keyword id="KW-1185">Reference proteome</keyword>
<feature type="chain" id="PRO_0000216215" description="Uncharacterized protein TM_0928">
    <location>
        <begin position="1"/>
        <end position="246"/>
    </location>
</feature>
<evidence type="ECO:0000305" key="1"/>
<evidence type="ECO:0000305" key="2">
    <source>
    </source>
</evidence>
<name>Y928_THEMA</name>
<reference key="1">
    <citation type="journal article" date="1994" name="EMBO J.">
        <title>Sequence, assembly and evolution of a primordial ferredoxin from Thermotoga maritima.</title>
        <authorList>
            <person name="Darimont B."/>
            <person name="Sterner R."/>
        </authorList>
    </citation>
    <scope>NUCLEOTIDE SEQUENCE [GENOMIC DNA]</scope>
    <source>
        <strain>ATCC 43589 / DSM 3109 / JCM 10099 / NBRC 100826 / MSB8</strain>
    </source>
</reference>
<reference key="2">
    <citation type="journal article" date="1999" name="Nature">
        <title>Evidence for lateral gene transfer between Archaea and Bacteria from genome sequence of Thermotoga maritima.</title>
        <authorList>
            <person name="Nelson K.E."/>
            <person name="Clayton R.A."/>
            <person name="Gill S.R."/>
            <person name="Gwinn M.L."/>
            <person name="Dodson R.J."/>
            <person name="Haft D.H."/>
            <person name="Hickey E.K."/>
            <person name="Peterson J.D."/>
            <person name="Nelson W.C."/>
            <person name="Ketchum K.A."/>
            <person name="McDonald L.A."/>
            <person name="Utterback T.R."/>
            <person name="Malek J.A."/>
            <person name="Linher K.D."/>
            <person name="Garrett M.M."/>
            <person name="Stewart A.M."/>
            <person name="Cotton M.D."/>
            <person name="Pratt M.S."/>
            <person name="Phillips C.A."/>
            <person name="Richardson D.L."/>
            <person name="Heidelberg J.F."/>
            <person name="Sutton G.G."/>
            <person name="Fleischmann R.D."/>
            <person name="Eisen J.A."/>
            <person name="White O."/>
            <person name="Salzberg S.L."/>
            <person name="Smith H.O."/>
            <person name="Venter J.C."/>
            <person name="Fraser C.M."/>
        </authorList>
    </citation>
    <scope>NUCLEOTIDE SEQUENCE [LARGE SCALE GENOMIC DNA]</scope>
    <source>
        <strain>ATCC 43589 / DSM 3109 / JCM 10099 / NBRC 100826 / MSB8</strain>
    </source>
</reference>
<organism>
    <name type="scientific">Thermotoga maritima (strain ATCC 43589 / DSM 3109 / JCM 10099 / NBRC 100826 / MSB8)</name>
    <dbReference type="NCBI Taxonomy" id="243274"/>
    <lineage>
        <taxon>Bacteria</taxon>
        <taxon>Thermotogati</taxon>
        <taxon>Thermotogota</taxon>
        <taxon>Thermotogae</taxon>
        <taxon>Thermotogales</taxon>
        <taxon>Thermotogaceae</taxon>
        <taxon>Thermotoga</taxon>
    </lineage>
</organism>
<comment type="caution">
    <text evidence="2">Was originally proposed to be fused with TM_0929.</text>
</comment>
<comment type="sequence caution" evidence="1">
    <conflict type="erroneous initiation">
        <sequence resource="EMBL-CDS" id="AAA65436"/>
    </conflict>
</comment>
<comment type="sequence caution" evidence="1">
    <conflict type="erroneous initiation">
        <sequence resource="EMBL-CDS" id="CAA57668"/>
    </conflict>
</comment>